<keyword id="KW-1015">Disulfide bond</keyword>
<keyword id="KW-0325">Glycoprotein</keyword>
<keyword id="KW-0378">Hydrolase</keyword>
<keyword id="KW-0479">Metal-binding</keyword>
<keyword id="KW-0482">Metalloprotease</keyword>
<keyword id="KW-0645">Protease</keyword>
<keyword id="KW-1185">Reference proteome</keyword>
<keyword id="KW-0964">Secreted</keyword>
<keyword id="KW-0732">Signal</keyword>
<keyword id="KW-0843">Virulence</keyword>
<keyword id="KW-0862">Zinc</keyword>
<comment type="function">
    <text evidence="1">Secreted metalloproteinase that allows assimilation of proteinaceous substrates. Plays a pivotal role as a pathogenicity determinant during infections and contributes to the ability of the pathogen to persist within the mammalian host (By similarity).</text>
</comment>
<comment type="subcellular location">
    <subcellularLocation>
        <location evidence="1">Secreted</location>
    </subcellularLocation>
</comment>
<comment type="similarity">
    <text evidence="5">Belongs to the peptidase M43B family.</text>
</comment>
<sequence>MRLSLFLSGLAAAGSIVSAERTCGAVPPRGYEKEFSEAFAALGPEATSDLTAGITIDTYLHVLTSGTTGNIPDSQLQAQINAMNQHYGPSGVQFRLVKATRTNNANWASGRDEAGMKSALHMGTYSSLNIYFIPNLSSGLLGICYFPRANPSQTTITMDGCMVRSGTVPGGETTNYNQGKTATHEVGHFLGLYHVFSENGSCVDADMVADTPPQSKKTSGCPNSQDSCPGGGVDSIHNYMDYSYDVCMNQFTRGQASRIAQAWQAFRAGH</sequence>
<evidence type="ECO:0000250" key="1"/>
<evidence type="ECO:0000255" key="2"/>
<evidence type="ECO:0000255" key="3">
    <source>
        <dbReference type="PROSITE-ProRule" id="PRU10095"/>
    </source>
</evidence>
<evidence type="ECO:0000256" key="4">
    <source>
        <dbReference type="SAM" id="MobiDB-lite"/>
    </source>
</evidence>
<evidence type="ECO:0000305" key="5"/>
<dbReference type="EC" id="3.4.24.-"/>
<dbReference type="EMBL" id="DS995704">
    <property type="protein sequence ID" value="EEQ32147.1"/>
    <property type="molecule type" value="Genomic_DNA"/>
</dbReference>
<dbReference type="RefSeq" id="XP_002847229.1">
    <property type="nucleotide sequence ID" value="XM_002847183.1"/>
</dbReference>
<dbReference type="SMR" id="C5FQJ4"/>
<dbReference type="STRING" id="554155.C5FQJ4"/>
<dbReference type="GeneID" id="9223835"/>
<dbReference type="VEuPathDB" id="FungiDB:MCYG_04966"/>
<dbReference type="eggNOG" id="ENOG502RYKG">
    <property type="taxonomic scope" value="Eukaryota"/>
</dbReference>
<dbReference type="HOGENOM" id="CLU_048726_0_0_1"/>
<dbReference type="OMA" id="AMNQHYG"/>
<dbReference type="OrthoDB" id="536211at2759"/>
<dbReference type="Proteomes" id="UP000002035">
    <property type="component" value="Unassembled WGS sequence"/>
</dbReference>
<dbReference type="GO" id="GO:0005576">
    <property type="term" value="C:extracellular region"/>
    <property type="evidence" value="ECO:0007669"/>
    <property type="project" value="UniProtKB-SubCell"/>
</dbReference>
<dbReference type="GO" id="GO:0046872">
    <property type="term" value="F:metal ion binding"/>
    <property type="evidence" value="ECO:0007669"/>
    <property type="project" value="UniProtKB-KW"/>
</dbReference>
<dbReference type="GO" id="GO:0008237">
    <property type="term" value="F:metallopeptidase activity"/>
    <property type="evidence" value="ECO:0007669"/>
    <property type="project" value="UniProtKB-KW"/>
</dbReference>
<dbReference type="GO" id="GO:0006508">
    <property type="term" value="P:proteolysis"/>
    <property type="evidence" value="ECO:0007669"/>
    <property type="project" value="UniProtKB-KW"/>
</dbReference>
<dbReference type="CDD" id="cd04275">
    <property type="entry name" value="ZnMc_pappalysin_like"/>
    <property type="match status" value="1"/>
</dbReference>
<dbReference type="Gene3D" id="3.40.390.10">
    <property type="entry name" value="Collagenase (Catalytic Domain)"/>
    <property type="match status" value="1"/>
</dbReference>
<dbReference type="InterPro" id="IPR024079">
    <property type="entry name" value="MetalloPept_cat_dom_sf"/>
</dbReference>
<dbReference type="InterPro" id="IPR008754">
    <property type="entry name" value="Peptidase_M43"/>
</dbReference>
<dbReference type="PANTHER" id="PTHR47466">
    <property type="match status" value="1"/>
</dbReference>
<dbReference type="PANTHER" id="PTHR47466:SF1">
    <property type="entry name" value="METALLOPROTEASE MEP1 (AFU_ORTHOLOGUE AFUA_1G07730)-RELATED"/>
    <property type="match status" value="1"/>
</dbReference>
<dbReference type="Pfam" id="PF05572">
    <property type="entry name" value="Peptidase_M43"/>
    <property type="match status" value="1"/>
</dbReference>
<dbReference type="SUPFAM" id="SSF55486">
    <property type="entry name" value="Metalloproteases ('zincins'), catalytic domain"/>
    <property type="match status" value="1"/>
</dbReference>
<dbReference type="PROSITE" id="PS00142">
    <property type="entry name" value="ZINC_PROTEASE"/>
    <property type="match status" value="1"/>
</dbReference>
<organism>
    <name type="scientific">Arthroderma otae (strain ATCC MYA-4605 / CBS 113480)</name>
    <name type="common">Microsporum canis</name>
    <dbReference type="NCBI Taxonomy" id="554155"/>
    <lineage>
        <taxon>Eukaryota</taxon>
        <taxon>Fungi</taxon>
        <taxon>Dikarya</taxon>
        <taxon>Ascomycota</taxon>
        <taxon>Pezizomycotina</taxon>
        <taxon>Eurotiomycetes</taxon>
        <taxon>Eurotiomycetidae</taxon>
        <taxon>Onygenales</taxon>
        <taxon>Arthrodermataceae</taxon>
        <taxon>Microsporum</taxon>
    </lineage>
</organism>
<name>MEP6_ARTOC</name>
<reference key="1">
    <citation type="journal article" date="2012" name="MBio">
        <title>Comparative genome analysis of Trichophyton rubrum and related dermatophytes reveals candidate genes involved in infection.</title>
        <authorList>
            <person name="Martinez D.A."/>
            <person name="Oliver B.G."/>
            <person name="Graeser Y."/>
            <person name="Goldberg J.M."/>
            <person name="Li W."/>
            <person name="Martinez-Rossi N.M."/>
            <person name="Monod M."/>
            <person name="Shelest E."/>
            <person name="Barton R.C."/>
            <person name="Birch E."/>
            <person name="Brakhage A.A."/>
            <person name="Chen Z."/>
            <person name="Gurr S.J."/>
            <person name="Heiman D."/>
            <person name="Heitman J."/>
            <person name="Kosti I."/>
            <person name="Rossi A."/>
            <person name="Saif S."/>
            <person name="Samalova M."/>
            <person name="Saunders C.W."/>
            <person name="Shea T."/>
            <person name="Summerbell R.C."/>
            <person name="Xu J."/>
            <person name="Young S."/>
            <person name="Zeng Q."/>
            <person name="Birren B.W."/>
            <person name="Cuomo C.A."/>
            <person name="White T.C."/>
        </authorList>
    </citation>
    <scope>NUCLEOTIDE SEQUENCE [LARGE SCALE GENOMIC DNA]</scope>
    <source>
        <strain>ATCC MYA-4605 / CBS 113480</strain>
    </source>
</reference>
<protein>
    <recommendedName>
        <fullName>Extracellular metalloprotease MCYG_04966</fullName>
        <ecNumber>3.4.24.-</ecNumber>
    </recommendedName>
</protein>
<feature type="signal peptide" evidence="2">
    <location>
        <begin position="1"/>
        <end position="19"/>
    </location>
</feature>
<feature type="chain" id="PRO_0000407212" description="Extracellular metalloprotease MCYG_04966">
    <location>
        <begin position="20"/>
        <end position="270"/>
    </location>
</feature>
<feature type="region of interest" description="Disordered" evidence="4">
    <location>
        <begin position="208"/>
        <end position="227"/>
    </location>
</feature>
<feature type="compositionally biased region" description="Polar residues" evidence="4">
    <location>
        <begin position="212"/>
        <end position="227"/>
    </location>
</feature>
<feature type="active site" evidence="3">
    <location>
        <position position="185"/>
    </location>
</feature>
<feature type="binding site" evidence="3">
    <location>
        <position position="184"/>
    </location>
    <ligand>
        <name>Zn(2+)</name>
        <dbReference type="ChEBI" id="CHEBI:29105"/>
        <note>catalytic</note>
    </ligand>
</feature>
<feature type="binding site" evidence="3">
    <location>
        <position position="188"/>
    </location>
    <ligand>
        <name>Zn(2+)</name>
        <dbReference type="ChEBI" id="CHEBI:29105"/>
        <note>catalytic</note>
    </ligand>
</feature>
<feature type="glycosylation site" description="N-linked (GlcNAc...) asparagine" evidence="2">
    <location>
        <position position="135"/>
    </location>
</feature>
<feature type="glycosylation site" description="N-linked (GlcNAc...) asparagine" evidence="2">
    <location>
        <position position="199"/>
    </location>
</feature>
<feature type="disulfide bond" evidence="1">
    <location>
        <begin position="221"/>
        <end position="247"/>
    </location>
</feature>
<proteinExistence type="inferred from homology"/>
<gene>
    <name type="ORF">MCYG_04966</name>
</gene>
<accession>C5FQJ4</accession>